<protein>
    <recommendedName>
        <fullName evidence="9">Sensor protein kinase WalK</fullName>
        <ecNumber evidence="1">2.7.13.3</ecNumber>
    </recommendedName>
</protein>
<name>WALK_STAAM</name>
<dbReference type="EC" id="2.7.13.3" evidence="1"/>
<dbReference type="EMBL" id="BA000017">
    <property type="protein sequence ID" value="BAB56181.1"/>
    <property type="molecule type" value="Genomic_DNA"/>
</dbReference>
<dbReference type="RefSeq" id="WP_000871607.1">
    <property type="nucleotide sequence ID" value="NC_002758.2"/>
</dbReference>
<dbReference type="SMR" id="Q7A305"/>
<dbReference type="KEGG" id="sav:SAV0019"/>
<dbReference type="HOGENOM" id="CLU_000445_89_2_9"/>
<dbReference type="PhylomeDB" id="Q7A305"/>
<dbReference type="Proteomes" id="UP000002481">
    <property type="component" value="Chromosome"/>
</dbReference>
<dbReference type="GO" id="GO:0005886">
    <property type="term" value="C:plasma membrane"/>
    <property type="evidence" value="ECO:0007669"/>
    <property type="project" value="UniProtKB-SubCell"/>
</dbReference>
<dbReference type="GO" id="GO:0005524">
    <property type="term" value="F:ATP binding"/>
    <property type="evidence" value="ECO:0007669"/>
    <property type="project" value="UniProtKB-KW"/>
</dbReference>
<dbReference type="GO" id="GO:0046872">
    <property type="term" value="F:metal ion binding"/>
    <property type="evidence" value="ECO:0007669"/>
    <property type="project" value="UniProtKB-KW"/>
</dbReference>
<dbReference type="GO" id="GO:0000156">
    <property type="term" value="F:phosphorelay response regulator activity"/>
    <property type="evidence" value="ECO:0007669"/>
    <property type="project" value="TreeGrafter"/>
</dbReference>
<dbReference type="GO" id="GO:0000155">
    <property type="term" value="F:phosphorelay sensor kinase activity"/>
    <property type="evidence" value="ECO:0007669"/>
    <property type="project" value="InterPro"/>
</dbReference>
<dbReference type="GO" id="GO:0030295">
    <property type="term" value="F:protein kinase activator activity"/>
    <property type="evidence" value="ECO:0007669"/>
    <property type="project" value="TreeGrafter"/>
</dbReference>
<dbReference type="GO" id="GO:0007234">
    <property type="term" value="P:osmosensory signaling via phosphorelay pathway"/>
    <property type="evidence" value="ECO:0007669"/>
    <property type="project" value="TreeGrafter"/>
</dbReference>
<dbReference type="CDD" id="cd06225">
    <property type="entry name" value="HAMP"/>
    <property type="match status" value="1"/>
</dbReference>
<dbReference type="CDD" id="cd00075">
    <property type="entry name" value="HATPase"/>
    <property type="match status" value="1"/>
</dbReference>
<dbReference type="CDD" id="cd00082">
    <property type="entry name" value="HisKA"/>
    <property type="match status" value="1"/>
</dbReference>
<dbReference type="CDD" id="cd00130">
    <property type="entry name" value="PAS"/>
    <property type="match status" value="1"/>
</dbReference>
<dbReference type="FunFam" id="1.10.8.500:FF:000001">
    <property type="entry name" value="Cell wall metabolism sensor histidine kinase"/>
    <property type="match status" value="1"/>
</dbReference>
<dbReference type="FunFam" id="3.30.450.20:FF:000037">
    <property type="entry name" value="Cell wall metabolism sensor histidine kinase"/>
    <property type="match status" value="1"/>
</dbReference>
<dbReference type="FunFam" id="3.30.565.10:FF:000006">
    <property type="entry name" value="Sensor histidine kinase WalK"/>
    <property type="match status" value="1"/>
</dbReference>
<dbReference type="FunFam" id="1.10.287.130:FF:000001">
    <property type="entry name" value="Two-component sensor histidine kinase"/>
    <property type="match status" value="1"/>
</dbReference>
<dbReference type="Gene3D" id="1.10.287.130">
    <property type="match status" value="1"/>
</dbReference>
<dbReference type="Gene3D" id="1.10.8.500">
    <property type="entry name" value="HAMP domain in histidine kinase"/>
    <property type="match status" value="1"/>
</dbReference>
<dbReference type="Gene3D" id="3.30.565.10">
    <property type="entry name" value="Histidine kinase-like ATPase, C-terminal domain"/>
    <property type="match status" value="1"/>
</dbReference>
<dbReference type="Gene3D" id="3.30.450.20">
    <property type="entry name" value="PAS domain"/>
    <property type="match status" value="2"/>
</dbReference>
<dbReference type="InterPro" id="IPR003660">
    <property type="entry name" value="HAMP_dom"/>
</dbReference>
<dbReference type="InterPro" id="IPR036890">
    <property type="entry name" value="HATPase_C_sf"/>
</dbReference>
<dbReference type="InterPro" id="IPR005467">
    <property type="entry name" value="His_kinase_dom"/>
</dbReference>
<dbReference type="InterPro" id="IPR003661">
    <property type="entry name" value="HisK_dim/P_dom"/>
</dbReference>
<dbReference type="InterPro" id="IPR036097">
    <property type="entry name" value="HisK_dim/P_sf"/>
</dbReference>
<dbReference type="InterPro" id="IPR052545">
    <property type="entry name" value="Light-responsive_reg"/>
</dbReference>
<dbReference type="InterPro" id="IPR000014">
    <property type="entry name" value="PAS"/>
</dbReference>
<dbReference type="InterPro" id="IPR000700">
    <property type="entry name" value="PAS-assoc_C"/>
</dbReference>
<dbReference type="InterPro" id="IPR035965">
    <property type="entry name" value="PAS-like_dom_sf"/>
</dbReference>
<dbReference type="InterPro" id="IPR049814">
    <property type="entry name" value="Resp_reg_WalK"/>
</dbReference>
<dbReference type="InterPro" id="IPR029151">
    <property type="entry name" value="Sensor-like_sf"/>
</dbReference>
<dbReference type="InterPro" id="IPR004358">
    <property type="entry name" value="Sig_transdc_His_kin-like_C"/>
</dbReference>
<dbReference type="NCBIfam" id="NF033092">
    <property type="entry name" value="HK_WalK"/>
    <property type="match status" value="1"/>
</dbReference>
<dbReference type="NCBIfam" id="TIGR00229">
    <property type="entry name" value="sensory_box"/>
    <property type="match status" value="1"/>
</dbReference>
<dbReference type="PANTHER" id="PTHR42878:SF7">
    <property type="entry name" value="SENSOR HISTIDINE KINASE GLRK"/>
    <property type="match status" value="1"/>
</dbReference>
<dbReference type="PANTHER" id="PTHR42878">
    <property type="entry name" value="TWO-COMPONENT HISTIDINE KINASE"/>
    <property type="match status" value="1"/>
</dbReference>
<dbReference type="Pfam" id="PF23846">
    <property type="entry name" value="Cache_WalK"/>
    <property type="match status" value="1"/>
</dbReference>
<dbReference type="Pfam" id="PF00672">
    <property type="entry name" value="HAMP"/>
    <property type="match status" value="1"/>
</dbReference>
<dbReference type="Pfam" id="PF02518">
    <property type="entry name" value="HATPase_c"/>
    <property type="match status" value="1"/>
</dbReference>
<dbReference type="Pfam" id="PF00512">
    <property type="entry name" value="HisKA"/>
    <property type="match status" value="1"/>
</dbReference>
<dbReference type="Pfam" id="PF13426">
    <property type="entry name" value="PAS_9"/>
    <property type="match status" value="1"/>
</dbReference>
<dbReference type="PRINTS" id="PR00344">
    <property type="entry name" value="BCTRLSENSOR"/>
</dbReference>
<dbReference type="SMART" id="SM00304">
    <property type="entry name" value="HAMP"/>
    <property type="match status" value="1"/>
</dbReference>
<dbReference type="SMART" id="SM00387">
    <property type="entry name" value="HATPase_c"/>
    <property type="match status" value="1"/>
</dbReference>
<dbReference type="SMART" id="SM00388">
    <property type="entry name" value="HisKA"/>
    <property type="match status" value="1"/>
</dbReference>
<dbReference type="SMART" id="SM00091">
    <property type="entry name" value="PAS"/>
    <property type="match status" value="1"/>
</dbReference>
<dbReference type="SUPFAM" id="SSF55874">
    <property type="entry name" value="ATPase domain of HSP90 chaperone/DNA topoisomerase II/histidine kinase"/>
    <property type="match status" value="1"/>
</dbReference>
<dbReference type="SUPFAM" id="SSF158472">
    <property type="entry name" value="HAMP domain-like"/>
    <property type="match status" value="1"/>
</dbReference>
<dbReference type="SUPFAM" id="SSF47384">
    <property type="entry name" value="Homodimeric domain of signal transducing histidine kinase"/>
    <property type="match status" value="1"/>
</dbReference>
<dbReference type="SUPFAM" id="SSF55785">
    <property type="entry name" value="PYP-like sensor domain (PAS domain)"/>
    <property type="match status" value="1"/>
</dbReference>
<dbReference type="SUPFAM" id="SSF103190">
    <property type="entry name" value="Sensory domain-like"/>
    <property type="match status" value="1"/>
</dbReference>
<dbReference type="PROSITE" id="PS50885">
    <property type="entry name" value="HAMP"/>
    <property type="match status" value="1"/>
</dbReference>
<dbReference type="PROSITE" id="PS50109">
    <property type="entry name" value="HIS_KIN"/>
    <property type="match status" value="1"/>
</dbReference>
<dbReference type="PROSITE" id="PS50113">
    <property type="entry name" value="PAC"/>
    <property type="match status" value="1"/>
</dbReference>
<dbReference type="PROSITE" id="PS50112">
    <property type="entry name" value="PAS"/>
    <property type="match status" value="1"/>
</dbReference>
<gene>
    <name type="primary">walK</name>
    <name type="synonym">vicK</name>
    <name type="ordered locus">SAV0019</name>
</gene>
<sequence length="608" mass="69924">MKWLKQLQSLHTKLVIVYVLLIIIGMQIIGLYFTNNLEKELLDNFKKNITQYAKQLEISIEKVYDEKGSVNAQKDIQNLLSEYANRQEIGEIRFIDKDQIIIATTKQSNRSLINQKANDSSVQKALSLGQSNDHLILKDYGGGKDRVWVYNIPVKVDKKVIGNIYIESKINDVYNQLNNINQIFIVGTAISLLITVILGFFIARTITKPITDMRNQTVEMSRGNYTQRVKIYGNDEIGELALAFNNLSKRVQEAQANTESEKRRLDSVITHMSDGIIATDRRGRIRIVNDMALKMLGMAKEDIIGYYMLSVLSLEDEFKLEEIQENNDSFLLDLNEEEGLIARVNFSTIVQETGFVTGYIAVLHDVTEQQQVERERREFVANVSHELRTPLTSMNSYIEALEEGAWKDEELAPQFLSVTREETERMIRLVNDLLQLSKMDNESDQINKEIIDFNMFINKIINRHEMSAKDTTFIRDIPKKTIFTEFDPDKMTQVFDNVITNAMKYSRGDKRVEFHVKQNPLYNRMTIRIKDNGIGIPINKVDKIFDRFYRVDKARTRKMGGTGLGLAISKEIVEAHNGRIWANSVEGQGTSIFITLPCEVIEDGDWDE</sequence>
<organism>
    <name type="scientific">Staphylococcus aureus (strain Mu50 / ATCC 700699)</name>
    <dbReference type="NCBI Taxonomy" id="158878"/>
    <lineage>
        <taxon>Bacteria</taxon>
        <taxon>Bacillati</taxon>
        <taxon>Bacillota</taxon>
        <taxon>Bacilli</taxon>
        <taxon>Bacillales</taxon>
        <taxon>Staphylococcaceae</taxon>
        <taxon>Staphylococcus</taxon>
    </lineage>
</organism>
<evidence type="ECO:0000250" key="1">
    <source>
        <dbReference type="UniProtKB" id="O34206"/>
    </source>
</evidence>
<evidence type="ECO:0000250" key="2">
    <source>
        <dbReference type="UniProtKB" id="Q2G2U4"/>
    </source>
</evidence>
<evidence type="ECO:0000250" key="3">
    <source>
        <dbReference type="UniProtKB" id="Q9RDT3"/>
    </source>
</evidence>
<evidence type="ECO:0000255" key="4"/>
<evidence type="ECO:0000255" key="5">
    <source>
        <dbReference type="PROSITE-ProRule" id="PRU00102"/>
    </source>
</evidence>
<evidence type="ECO:0000255" key="6">
    <source>
        <dbReference type="PROSITE-ProRule" id="PRU00107"/>
    </source>
</evidence>
<evidence type="ECO:0000255" key="7">
    <source>
        <dbReference type="PROSITE-ProRule" id="PRU00140"/>
    </source>
</evidence>
<evidence type="ECO:0000255" key="8">
    <source>
        <dbReference type="PROSITE-ProRule" id="PRU00141"/>
    </source>
</evidence>
<evidence type="ECO:0000305" key="9"/>
<keyword id="KW-0067">ATP-binding</keyword>
<keyword id="KW-1003">Cell membrane</keyword>
<keyword id="KW-0418">Kinase</keyword>
<keyword id="KW-0472">Membrane</keyword>
<keyword id="KW-0479">Metal-binding</keyword>
<keyword id="KW-0547">Nucleotide-binding</keyword>
<keyword id="KW-0597">Phosphoprotein</keyword>
<keyword id="KW-0808">Transferase</keyword>
<keyword id="KW-0812">Transmembrane</keyword>
<keyword id="KW-1133">Transmembrane helix</keyword>
<keyword id="KW-0902">Two-component regulatory system</keyword>
<keyword id="KW-0862">Zinc</keyword>
<feature type="chain" id="PRO_0000353058" description="Sensor protein kinase WalK">
    <location>
        <begin position="1"/>
        <end position="608"/>
    </location>
</feature>
<feature type="transmembrane region" description="Helical" evidence="4">
    <location>
        <begin position="14"/>
        <end position="34"/>
    </location>
</feature>
<feature type="transmembrane region" description="Helical" evidence="4">
    <location>
        <begin position="183"/>
        <end position="203"/>
    </location>
</feature>
<feature type="domain" description="HAMP" evidence="5">
    <location>
        <begin position="204"/>
        <end position="256"/>
    </location>
</feature>
<feature type="domain" description="PAS" evidence="7">
    <location>
        <begin position="261"/>
        <end position="331"/>
    </location>
</feature>
<feature type="domain" description="PAC" evidence="8">
    <location>
        <begin position="314"/>
        <end position="378"/>
    </location>
</feature>
<feature type="domain" description="Histidine kinase" evidence="6">
    <location>
        <begin position="382"/>
        <end position="600"/>
    </location>
</feature>
<feature type="binding site" evidence="3">
    <location>
        <position position="271"/>
    </location>
    <ligand>
        <name>Zn(2+)</name>
        <dbReference type="ChEBI" id="CHEBI:29105"/>
    </ligand>
</feature>
<feature type="binding site" evidence="3">
    <location>
        <position position="274"/>
    </location>
    <ligand>
        <name>Zn(2+)</name>
        <dbReference type="ChEBI" id="CHEBI:29105"/>
    </ligand>
</feature>
<feature type="binding site" evidence="3">
    <location>
        <position position="364"/>
    </location>
    <ligand>
        <name>Zn(2+)</name>
        <dbReference type="ChEBI" id="CHEBI:29105"/>
    </ligand>
</feature>
<feature type="binding site" evidence="3">
    <location>
        <position position="368"/>
    </location>
    <ligand>
        <name>Zn(2+)</name>
        <dbReference type="ChEBI" id="CHEBI:29105"/>
    </ligand>
</feature>
<feature type="modified residue" description="Phosphohistidine; by autocatalysis" evidence="6">
    <location>
        <position position="385"/>
    </location>
</feature>
<reference key="1">
    <citation type="journal article" date="2001" name="Lancet">
        <title>Whole genome sequencing of meticillin-resistant Staphylococcus aureus.</title>
        <authorList>
            <person name="Kuroda M."/>
            <person name="Ohta T."/>
            <person name="Uchiyama I."/>
            <person name="Baba T."/>
            <person name="Yuzawa H."/>
            <person name="Kobayashi I."/>
            <person name="Cui L."/>
            <person name="Oguchi A."/>
            <person name="Aoki K."/>
            <person name="Nagai Y."/>
            <person name="Lian J.-Q."/>
            <person name="Ito T."/>
            <person name="Kanamori M."/>
            <person name="Matsumaru H."/>
            <person name="Maruyama A."/>
            <person name="Murakami H."/>
            <person name="Hosoyama A."/>
            <person name="Mizutani-Ui Y."/>
            <person name="Takahashi N.K."/>
            <person name="Sawano T."/>
            <person name="Inoue R."/>
            <person name="Kaito C."/>
            <person name="Sekimizu K."/>
            <person name="Hirakawa H."/>
            <person name="Kuhara S."/>
            <person name="Goto S."/>
            <person name="Yabuzaki J."/>
            <person name="Kanehisa M."/>
            <person name="Yamashita A."/>
            <person name="Oshima K."/>
            <person name="Furuya K."/>
            <person name="Yoshino C."/>
            <person name="Shiba T."/>
            <person name="Hattori M."/>
            <person name="Ogasawara N."/>
            <person name="Hayashi H."/>
            <person name="Hiramatsu K."/>
        </authorList>
    </citation>
    <scope>NUCLEOTIDE SEQUENCE [LARGE SCALE GENOMIC DNA]</scope>
    <source>
        <strain>Mu50 / ATCC 700699</strain>
    </source>
</reference>
<proteinExistence type="inferred from homology"/>
<comment type="function">
    <text evidence="3">Member of the two-component regulatory system WalK/WalR that regulates genes involved in cell wall metabolism, virulence regulation, biofilm production, oxidative stress resistance and antibiotic resistance via direct or indirect regulation of autolysins. Functions as a sensor protein kinase which is autophosphorylated at a histidine residue in the dimerization domain and transfers its phosphate group to the conserved aspartic acid residue in the regulatory domain of WalR. In turn, WalR binds to the upstream promoter regions of the target genes to positively and negatively regulate their expression.</text>
</comment>
<comment type="catalytic activity">
    <reaction evidence="3">
        <text>ATP + protein L-histidine = ADP + protein N-phospho-L-histidine.</text>
        <dbReference type="EC" id="2.7.13.3"/>
    </reaction>
</comment>
<comment type="activity regulation">
    <text evidence="3">By zinc. Zinc-binding negatively regulates WalK kinase activity and thus autophosphorylation.</text>
</comment>
<comment type="subunit">
    <text evidence="2">Forms homodimers. Forms homooligomers.</text>
</comment>
<comment type="subcellular location">
    <subcellularLocation>
        <location evidence="9">Cell membrane</location>
        <topology evidence="4">Multi-pass membrane protein</topology>
    </subcellularLocation>
</comment>
<comment type="PTM">
    <text evidence="3">Autophosphorylated.</text>
</comment>
<accession>Q7A305</accession>